<organism>
    <name type="scientific">Xenopus tropicalis</name>
    <name type="common">Western clawed frog</name>
    <name type="synonym">Silurana tropicalis</name>
    <dbReference type="NCBI Taxonomy" id="8364"/>
    <lineage>
        <taxon>Eukaryota</taxon>
        <taxon>Metazoa</taxon>
        <taxon>Chordata</taxon>
        <taxon>Craniata</taxon>
        <taxon>Vertebrata</taxon>
        <taxon>Euteleostomi</taxon>
        <taxon>Amphibia</taxon>
        <taxon>Batrachia</taxon>
        <taxon>Anura</taxon>
        <taxon>Pipoidea</taxon>
        <taxon>Pipidae</taxon>
        <taxon>Xenopodinae</taxon>
        <taxon>Xenopus</taxon>
        <taxon>Silurana</taxon>
    </lineage>
</organism>
<feature type="transit peptide" description="Mitochondrion" evidence="2">
    <location>
        <begin position="1"/>
        <end position="24"/>
    </location>
</feature>
<feature type="chain" id="PRO_0000307140" description="LETM1 domain-containing protein LETM2, mitochondrial">
    <location>
        <begin position="25"/>
        <end position="444"/>
    </location>
</feature>
<feature type="topological domain" description="Mitochondrial intermembrane" evidence="2">
    <location>
        <begin position="25"/>
        <end position="155"/>
    </location>
</feature>
<feature type="transmembrane region" description="Helical" evidence="2">
    <location>
        <begin position="156"/>
        <end position="176"/>
    </location>
</feature>
<feature type="topological domain" description="Mitochondrial matrix" evidence="2">
    <location>
        <begin position="177"/>
        <end position="444"/>
    </location>
</feature>
<feature type="domain" description="Letm1 RBD" evidence="3">
    <location>
        <begin position="199"/>
        <end position="417"/>
    </location>
</feature>
<feature type="region of interest" description="Disordered" evidence="4">
    <location>
        <begin position="73"/>
        <end position="94"/>
    </location>
</feature>
<feature type="compositionally biased region" description="Pro residues" evidence="4">
    <location>
        <begin position="74"/>
        <end position="87"/>
    </location>
</feature>
<reference key="1">
    <citation type="submission" date="2006-10" db="EMBL/GenBank/DDBJ databases">
        <authorList>
            <consortium name="Sanger Xenopus tropicalis EST/cDNA project"/>
        </authorList>
    </citation>
    <scope>NUCLEOTIDE SEQUENCE [LARGE SCALE MRNA]</scope>
    <source>
        <tissue>Egg</tissue>
    </source>
</reference>
<keyword id="KW-0472">Membrane</keyword>
<keyword id="KW-0496">Mitochondrion</keyword>
<keyword id="KW-0999">Mitochondrion inner membrane</keyword>
<keyword id="KW-1185">Reference proteome</keyword>
<keyword id="KW-0809">Transit peptide</keyword>
<keyword id="KW-0812">Transmembrane</keyword>
<keyword id="KW-1133">Transmembrane helix</keyword>
<dbReference type="EMBL" id="CR855606">
    <property type="protein sequence ID" value="CAJ81832.1"/>
    <property type="molecule type" value="mRNA"/>
</dbReference>
<dbReference type="RefSeq" id="NP_001016801.1">
    <property type="nucleotide sequence ID" value="NM_001016801.2"/>
</dbReference>
<dbReference type="SMR" id="Q28DA8"/>
<dbReference type="FunCoup" id="Q28DA8">
    <property type="interactions" value="327"/>
</dbReference>
<dbReference type="STRING" id="8364.ENSXETP00000051089"/>
<dbReference type="PaxDb" id="8364-ENSXETP00000005101"/>
<dbReference type="GeneID" id="549555"/>
<dbReference type="KEGG" id="xtr:549555"/>
<dbReference type="AGR" id="Xenbase:XB-GENE-5733328"/>
<dbReference type="CTD" id="137994"/>
<dbReference type="Xenbase" id="XB-GENE-5733328">
    <property type="gene designation" value="letm2"/>
</dbReference>
<dbReference type="eggNOG" id="KOG1043">
    <property type="taxonomic scope" value="Eukaryota"/>
</dbReference>
<dbReference type="InParanoid" id="Q28DA8"/>
<dbReference type="OMA" id="WHHFKDE"/>
<dbReference type="OrthoDB" id="624114at2759"/>
<dbReference type="Proteomes" id="UP000008143">
    <property type="component" value="Chromosome 3"/>
</dbReference>
<dbReference type="GO" id="GO:0005743">
    <property type="term" value="C:mitochondrial inner membrane"/>
    <property type="evidence" value="ECO:0007669"/>
    <property type="project" value="UniProtKB-SubCell"/>
</dbReference>
<dbReference type="GO" id="GO:0043022">
    <property type="term" value="F:ribosome binding"/>
    <property type="evidence" value="ECO:0007669"/>
    <property type="project" value="InterPro"/>
</dbReference>
<dbReference type="InterPro" id="IPR033122">
    <property type="entry name" value="LETM1-like_RBD"/>
</dbReference>
<dbReference type="InterPro" id="IPR044202">
    <property type="entry name" value="LETM1/MDM38-like"/>
</dbReference>
<dbReference type="PANTHER" id="PTHR14009:SF7">
    <property type="entry name" value="LETM1 DOMAIN-CONTAINING PROTEIN LETM2, MITOCHONDRIAL"/>
    <property type="match status" value="1"/>
</dbReference>
<dbReference type="PANTHER" id="PTHR14009">
    <property type="entry name" value="LEUCINE ZIPPER-EF-HAND CONTAINING TRANSMEMBRANE PROTEIN"/>
    <property type="match status" value="1"/>
</dbReference>
<dbReference type="Pfam" id="PF07766">
    <property type="entry name" value="LETM1_RBD"/>
    <property type="match status" value="1"/>
</dbReference>
<dbReference type="PROSITE" id="PS51758">
    <property type="entry name" value="LETM1_RBD"/>
    <property type="match status" value="1"/>
</dbReference>
<protein>
    <recommendedName>
        <fullName>LETM1 domain-containing protein LETM2, mitochondrial</fullName>
    </recommendedName>
    <alternativeName>
        <fullName>LETM1 and EF-hand domain-containing protein 2</fullName>
    </alternativeName>
    <alternativeName>
        <fullName>Leucine zipper-EF-hand-containing transmembrane protein 1-like</fullName>
    </alternativeName>
</protein>
<gene>
    <name type="primary">letm2</name>
    <name type="ORF">TEgg018g03.1</name>
</gene>
<name>LETM2_XENTR</name>
<comment type="subcellular location">
    <subcellularLocation>
        <location evidence="1">Mitochondrion inner membrane</location>
        <topology evidence="1">Single-pass membrane protein</topology>
    </subcellularLocation>
</comment>
<comment type="caution">
    <text evidence="5">Despite its name, it does not contain any EF-hand domains.</text>
</comment>
<evidence type="ECO:0000250" key="1"/>
<evidence type="ECO:0000255" key="2"/>
<evidence type="ECO:0000255" key="3">
    <source>
        <dbReference type="PROSITE-ProRule" id="PRU01094"/>
    </source>
</evidence>
<evidence type="ECO:0000256" key="4">
    <source>
        <dbReference type="SAM" id="MobiDB-lite"/>
    </source>
</evidence>
<evidence type="ECO:0000305" key="5"/>
<sequence length="444" mass="49932">MATYTCSVVLASLRCRSSHLVLRKNLCPIYTSVSCAQNRAYAPRSSCLVQAAFVSPSWSSRAFHTSGFCLQDAPPSPPPPSTPPSPPEPEKAPQVVRKSLGQRVVDEIKHFYHGFRLLGIDTKVAARMVWRLLHGQVLTRRERRRLMRTCADLFRLVPFMVFVIVPFMEFLLPVFLKLFPEMLPSTFETESKKEEKVKKKLAAKLEMAKFLQETISEMARRNKAETGADTQQQFSSYVQQVRGTGEQPSTKEIVRFSKLFEDELTLEHLERSQLVALCRLLELPPIGTNNLLRFQLMMQLRSIRADDEMISKEGVENLTVAELQAASRARGMRSLGLTEEQLKEQMKQWLDLHLKENVPPSLLLLSRALYLTELKPKPILPLKQAVEIPKINPAVVEAVEAKDNLADTAPTLKGLKGEELVSGTLLKESAVQSKENTKASANGV</sequence>
<proteinExistence type="evidence at transcript level"/>
<accession>Q28DA8</accession>